<organism>
    <name type="scientific">Haloarcula marismortui (strain ATCC 43049 / DSM 3752 / JCM 8966 / VKM B-1809)</name>
    <name type="common">Halobacterium marismortui</name>
    <dbReference type="NCBI Taxonomy" id="272569"/>
    <lineage>
        <taxon>Archaea</taxon>
        <taxon>Methanobacteriati</taxon>
        <taxon>Methanobacteriota</taxon>
        <taxon>Stenosarchaea group</taxon>
        <taxon>Halobacteria</taxon>
        <taxon>Halobacteriales</taxon>
        <taxon>Haloarculaceae</taxon>
        <taxon>Haloarcula</taxon>
    </lineage>
</organism>
<sequence length="56" mass="6388">MSTYTVRGSFPARDGPQQFEKEVEAPNENVAEERVYSDFGSQHNLKRTQITIEEVA</sequence>
<feature type="initiator methionine" description="Removed" evidence="3">
    <location>
        <position position="1"/>
    </location>
</feature>
<feature type="chain" id="PRO_0000153696" description="Large ribosomal subunit protein eL20">
    <location>
        <begin position="2"/>
        <end position="56"/>
    </location>
</feature>
<feature type="region of interest" description="Disordered" evidence="2">
    <location>
        <begin position="1"/>
        <end position="24"/>
    </location>
</feature>
<feature type="strand" evidence="5">
    <location>
        <begin position="4"/>
        <end position="10"/>
    </location>
</feature>
<feature type="strand" evidence="5">
    <location>
        <begin position="13"/>
        <end position="15"/>
    </location>
</feature>
<feature type="strand" evidence="5">
    <location>
        <begin position="17"/>
        <end position="23"/>
    </location>
</feature>
<feature type="helix" evidence="5">
    <location>
        <begin position="28"/>
        <end position="43"/>
    </location>
</feature>
<feature type="turn" evidence="5">
    <location>
        <begin position="47"/>
        <end position="49"/>
    </location>
</feature>
<feature type="strand" evidence="5">
    <location>
        <begin position="51"/>
        <end position="56"/>
    </location>
</feature>
<keyword id="KW-0002">3D-structure</keyword>
<keyword id="KW-0903">Direct protein sequencing</keyword>
<keyword id="KW-1185">Reference proteome</keyword>
<keyword id="KW-0687">Ribonucleoprotein</keyword>
<keyword id="KW-0689">Ribosomal protein</keyword>
<keyword id="KW-0694">RNA-binding</keyword>
<keyword id="KW-0699">rRNA-binding</keyword>
<protein>
    <recommendedName>
        <fullName evidence="1">Large ribosomal subunit protein eL20</fullName>
    </recommendedName>
    <alternativeName>
        <fullName evidence="4">50S ribosomal protein L18Ae</fullName>
    </alternativeName>
    <alternativeName>
        <fullName evidence="1">50S ribosomal protein L20e</fullName>
    </alternativeName>
    <alternativeName>
        <fullName evidence="1">50S ribosomal protein LX</fullName>
    </alternativeName>
    <alternativeName>
        <fullName>HL32</fullName>
    </alternativeName>
</protein>
<comment type="subunit">
    <text evidence="1 3">Part of the 50S ribosomal subunit. Binds 23S rRNA.</text>
</comment>
<comment type="similarity">
    <text evidence="1">Belongs to the eukaryotic ribosomal protein eL20 family.</text>
</comment>
<reference key="1">
    <citation type="journal article" date="2004" name="Genome Res.">
        <title>Genome sequence of Haloarcula marismortui: a halophilic archaeon from the Dead Sea.</title>
        <authorList>
            <person name="Baliga N.S."/>
            <person name="Bonneau R."/>
            <person name="Facciotti M.T."/>
            <person name="Pan M."/>
            <person name="Glusman G."/>
            <person name="Deutsch E.W."/>
            <person name="Shannon P."/>
            <person name="Chiu Y."/>
            <person name="Weng R.S."/>
            <person name="Gan R.R."/>
            <person name="Hung P."/>
            <person name="Date S.V."/>
            <person name="Marcotte E."/>
            <person name="Hood L."/>
            <person name="Ng W.V."/>
        </authorList>
    </citation>
    <scope>NUCLEOTIDE SEQUENCE [LARGE SCALE GENOMIC DNA]</scope>
    <source>
        <strain>ATCC 43049 / DSM 3752 / JCM 8966 / VKM B-1809</strain>
    </source>
</reference>
<reference key="2">
    <citation type="journal article" date="1989" name="Eur. J. Biochem.">
        <title>Primary structures of five ribosomal proteins from the archaebacterium Halobacterium marismortui and their structural relationships to eubacterial and eukaryotic ribosomal proteins.</title>
        <authorList>
            <person name="Hatakeyama T."/>
            <person name="Kaufmann F."/>
            <person name="Schroeter B."/>
            <person name="Hatakeyama T."/>
        </authorList>
    </citation>
    <scope>PROTEIN SEQUENCE OF 2-56</scope>
    <scope>SUBUNIT</scope>
</reference>
<reference key="3">
    <citation type="journal article" date="2013" name="Acta Crystallogr. D">
        <title>Revisiting the Haloarcula marismortui 50S ribosomal subunit model.</title>
        <authorList>
            <person name="Gabdulkhakov A."/>
            <person name="Nikonov S."/>
            <person name="Garber M."/>
        </authorList>
    </citation>
    <scope>X-RAY CRYSTALLOGRAPHY (2.4 ANGSTROMS) OF THE 50S SUBUNIT</scope>
    <scope>RRNA-BINDING</scope>
</reference>
<gene>
    <name evidence="1" type="primary">rpl18a</name>
    <name evidence="1" type="synonym">rpl20e</name>
    <name evidence="1" type="synonym">rplX</name>
    <name type="ordered locus">rrnAC3115.1</name>
</gene>
<evidence type="ECO:0000255" key="1">
    <source>
        <dbReference type="HAMAP-Rule" id="MF_00273"/>
    </source>
</evidence>
<evidence type="ECO:0000256" key="2">
    <source>
        <dbReference type="SAM" id="MobiDB-lite"/>
    </source>
</evidence>
<evidence type="ECO:0000269" key="3">
    <source>
    </source>
</evidence>
<evidence type="ECO:0000305" key="4"/>
<evidence type="ECO:0007829" key="5">
    <source>
        <dbReference type="PDB" id="4V9F"/>
    </source>
</evidence>
<proteinExistence type="evidence at protein level"/>
<accession>P14125</accession>
<name>RL18A_HALMA</name>
<dbReference type="EMBL" id="AY596297">
    <property type="status" value="NOT_ANNOTATED_CDS"/>
    <property type="molecule type" value="Genomic_DNA"/>
</dbReference>
<dbReference type="PIR" id="S06848">
    <property type="entry name" value="R5HS32"/>
</dbReference>
<dbReference type="PDB" id="4V9F">
    <property type="method" value="X-ray"/>
    <property type="resolution" value="2.40 A"/>
    <property type="chains" value="6=1-56"/>
</dbReference>
<dbReference type="PDBsum" id="4V9F"/>
<dbReference type="SMR" id="P14125"/>
<dbReference type="IntAct" id="P14125">
    <property type="interactions" value="1"/>
</dbReference>
<dbReference type="Proteomes" id="UP000001169">
    <property type="component" value="Chromosome I"/>
</dbReference>
<dbReference type="GO" id="GO:1990904">
    <property type="term" value="C:ribonucleoprotein complex"/>
    <property type="evidence" value="ECO:0007669"/>
    <property type="project" value="UniProtKB-KW"/>
</dbReference>
<dbReference type="GO" id="GO:0005840">
    <property type="term" value="C:ribosome"/>
    <property type="evidence" value="ECO:0007669"/>
    <property type="project" value="UniProtKB-KW"/>
</dbReference>
<dbReference type="GO" id="GO:0070180">
    <property type="term" value="F:large ribosomal subunit rRNA binding"/>
    <property type="evidence" value="ECO:0007669"/>
    <property type="project" value="UniProtKB-UniRule"/>
</dbReference>
<dbReference type="GO" id="GO:0003735">
    <property type="term" value="F:structural constituent of ribosome"/>
    <property type="evidence" value="ECO:0007669"/>
    <property type="project" value="InterPro"/>
</dbReference>
<dbReference type="GO" id="GO:0006412">
    <property type="term" value="P:translation"/>
    <property type="evidence" value="ECO:0007669"/>
    <property type="project" value="UniProtKB-UniRule"/>
</dbReference>
<dbReference type="Gene3D" id="3.10.20.10">
    <property type="match status" value="1"/>
</dbReference>
<dbReference type="HAMAP" id="MF_00273">
    <property type="entry name" value="Ribosomal_eL20"/>
    <property type="match status" value="1"/>
</dbReference>
<dbReference type="InterPro" id="IPR028877">
    <property type="entry name" value="Ribosomal_eL20"/>
</dbReference>
<dbReference type="InterPro" id="IPR023573">
    <property type="entry name" value="Ribosomal_eL20_dom"/>
</dbReference>
<dbReference type="NCBIfam" id="NF001981">
    <property type="entry name" value="PRK00773.1-1"/>
    <property type="match status" value="1"/>
</dbReference>
<dbReference type="Pfam" id="PF01775">
    <property type="entry name" value="Ribosomal_L18A"/>
    <property type="match status" value="1"/>
</dbReference>
<dbReference type="SUPFAM" id="SSF160374">
    <property type="entry name" value="RplX-like"/>
    <property type="match status" value="1"/>
</dbReference>